<evidence type="ECO:0000250" key="1"/>
<evidence type="ECO:0000255" key="2"/>
<evidence type="ECO:0000255" key="3">
    <source>
        <dbReference type="PROSITE-ProRule" id="PRU00280"/>
    </source>
</evidence>
<evidence type="ECO:0000269" key="4">
    <source>
    </source>
</evidence>
<evidence type="ECO:0000269" key="5">
    <source>
    </source>
</evidence>
<evidence type="ECO:0000269" key="6">
    <source>
    </source>
</evidence>
<evidence type="ECO:0000305" key="7"/>
<evidence type="ECO:0007829" key="8">
    <source>
        <dbReference type="PDB" id="1JWW"/>
    </source>
</evidence>
<evidence type="ECO:0007829" key="9">
    <source>
        <dbReference type="PDB" id="1OPZ"/>
    </source>
</evidence>
<dbReference type="EC" id="7.2.2.8"/>
<dbReference type="EMBL" id="AL009126">
    <property type="protein sequence ID" value="CAB15355.2"/>
    <property type="molecule type" value="Genomic_DNA"/>
</dbReference>
<dbReference type="PIR" id="E70041">
    <property type="entry name" value="E70041"/>
</dbReference>
<dbReference type="RefSeq" id="NP_391230.2">
    <property type="nucleotide sequence ID" value="NC_000964.3"/>
</dbReference>
<dbReference type="RefSeq" id="WP_003242925.1">
    <property type="nucleotide sequence ID" value="NZ_OZ025638.1"/>
</dbReference>
<dbReference type="PDB" id="1JWW">
    <property type="method" value="NMR"/>
    <property type="chains" value="A=71-146"/>
</dbReference>
<dbReference type="PDB" id="1KQK">
    <property type="method" value="NMR"/>
    <property type="chains" value="A=72-146"/>
</dbReference>
<dbReference type="PDB" id="1OPZ">
    <property type="method" value="NMR"/>
    <property type="chains" value="A=2-71"/>
</dbReference>
<dbReference type="PDB" id="1OQ3">
    <property type="method" value="NMR"/>
    <property type="chains" value="A=2-71"/>
</dbReference>
<dbReference type="PDB" id="1OQ6">
    <property type="method" value="NMR"/>
    <property type="chains" value="A=2-71"/>
</dbReference>
<dbReference type="PDB" id="1P6T">
    <property type="method" value="NMR"/>
    <property type="chains" value="A=2-146"/>
</dbReference>
<dbReference type="PDB" id="2RML">
    <property type="method" value="NMR"/>
    <property type="chains" value="A=2-146"/>
</dbReference>
<dbReference type="PDB" id="2VOY">
    <property type="method" value="EM"/>
    <property type="resolution" value="18.00 A"/>
    <property type="chains" value="A=71-146"/>
</dbReference>
<dbReference type="PDBsum" id="1JWW"/>
<dbReference type="PDBsum" id="1KQK"/>
<dbReference type="PDBsum" id="1OPZ"/>
<dbReference type="PDBsum" id="1OQ3"/>
<dbReference type="PDBsum" id="1OQ6"/>
<dbReference type="PDBsum" id="1P6T"/>
<dbReference type="PDBsum" id="2RML"/>
<dbReference type="PDBsum" id="2VOY"/>
<dbReference type="BMRB" id="O32220"/>
<dbReference type="SMR" id="O32220"/>
<dbReference type="FunCoup" id="O32220">
    <property type="interactions" value="599"/>
</dbReference>
<dbReference type="IntAct" id="O32220">
    <property type="interactions" value="2"/>
</dbReference>
<dbReference type="MINT" id="O32220"/>
<dbReference type="STRING" id="224308.BSU33500"/>
<dbReference type="TCDB" id="3.A.3.5.18">
    <property type="family name" value="the p-type atpase (p-atpase) superfamily"/>
</dbReference>
<dbReference type="PaxDb" id="224308-BSU33500"/>
<dbReference type="EnsemblBacteria" id="CAB15355">
    <property type="protein sequence ID" value="CAB15355"/>
    <property type="gene ID" value="BSU_33500"/>
</dbReference>
<dbReference type="GeneID" id="937985"/>
<dbReference type="KEGG" id="bsu:BSU33500"/>
<dbReference type="PATRIC" id="fig|224308.179.peg.3635"/>
<dbReference type="eggNOG" id="COG2217">
    <property type="taxonomic scope" value="Bacteria"/>
</dbReference>
<dbReference type="InParanoid" id="O32220"/>
<dbReference type="OrthoDB" id="9813266at2"/>
<dbReference type="PhylomeDB" id="O32220"/>
<dbReference type="BioCyc" id="BSUB:BSU33500-MONOMER"/>
<dbReference type="BRENDA" id="7.2.2.8">
    <property type="organism ID" value="658"/>
</dbReference>
<dbReference type="EvolutionaryTrace" id="O32220"/>
<dbReference type="Proteomes" id="UP000001570">
    <property type="component" value="Chromosome"/>
</dbReference>
<dbReference type="GO" id="GO:0016020">
    <property type="term" value="C:membrane"/>
    <property type="evidence" value="ECO:0000318"/>
    <property type="project" value="GO_Central"/>
</dbReference>
<dbReference type="GO" id="GO:0005886">
    <property type="term" value="C:plasma membrane"/>
    <property type="evidence" value="ECO:0007669"/>
    <property type="project" value="UniProtKB-SubCell"/>
</dbReference>
<dbReference type="GO" id="GO:0005524">
    <property type="term" value="F:ATP binding"/>
    <property type="evidence" value="ECO:0007669"/>
    <property type="project" value="UniProtKB-KW"/>
</dbReference>
<dbReference type="GO" id="GO:0016887">
    <property type="term" value="F:ATP hydrolysis activity"/>
    <property type="evidence" value="ECO:0007669"/>
    <property type="project" value="InterPro"/>
</dbReference>
<dbReference type="GO" id="GO:0005507">
    <property type="term" value="F:copper ion binding"/>
    <property type="evidence" value="ECO:0000318"/>
    <property type="project" value="GO_Central"/>
</dbReference>
<dbReference type="GO" id="GO:0042802">
    <property type="term" value="F:identical protein binding"/>
    <property type="evidence" value="ECO:0000353"/>
    <property type="project" value="IntAct"/>
</dbReference>
<dbReference type="GO" id="GO:0043682">
    <property type="term" value="F:P-type divalent copper transporter activity"/>
    <property type="evidence" value="ECO:0000318"/>
    <property type="project" value="GO_Central"/>
</dbReference>
<dbReference type="GO" id="GO:0140581">
    <property type="term" value="F:P-type monovalent copper transporter activity"/>
    <property type="evidence" value="ECO:0007669"/>
    <property type="project" value="UniProtKB-EC"/>
</dbReference>
<dbReference type="GO" id="GO:0055070">
    <property type="term" value="P:copper ion homeostasis"/>
    <property type="evidence" value="ECO:0000318"/>
    <property type="project" value="GO_Central"/>
</dbReference>
<dbReference type="CDD" id="cd00371">
    <property type="entry name" value="HMA"/>
    <property type="match status" value="2"/>
</dbReference>
<dbReference type="CDD" id="cd02094">
    <property type="entry name" value="P-type_ATPase_Cu-like"/>
    <property type="match status" value="1"/>
</dbReference>
<dbReference type="FunFam" id="3.30.70.100:FF:000005">
    <property type="entry name" value="Copper-exporting P-type ATPase A"/>
    <property type="match status" value="2"/>
</dbReference>
<dbReference type="FunFam" id="3.40.50.1000:FF:000144">
    <property type="entry name" value="copper-transporting ATPase 1 isoform X2"/>
    <property type="match status" value="1"/>
</dbReference>
<dbReference type="FunFam" id="2.70.150.10:FF:000002">
    <property type="entry name" value="Copper-transporting ATPase 1, putative"/>
    <property type="match status" value="1"/>
</dbReference>
<dbReference type="Gene3D" id="3.30.70.100">
    <property type="match status" value="2"/>
</dbReference>
<dbReference type="Gene3D" id="3.40.1110.10">
    <property type="entry name" value="Calcium-transporting ATPase, cytoplasmic domain N"/>
    <property type="match status" value="1"/>
</dbReference>
<dbReference type="Gene3D" id="2.70.150.10">
    <property type="entry name" value="Calcium-transporting ATPase, cytoplasmic transduction domain A"/>
    <property type="match status" value="1"/>
</dbReference>
<dbReference type="Gene3D" id="3.40.50.1000">
    <property type="entry name" value="HAD superfamily/HAD-like"/>
    <property type="match status" value="1"/>
</dbReference>
<dbReference type="InterPro" id="IPR023299">
    <property type="entry name" value="ATPase_P-typ_cyto_dom_N"/>
</dbReference>
<dbReference type="InterPro" id="IPR018303">
    <property type="entry name" value="ATPase_P-typ_P_site"/>
</dbReference>
<dbReference type="InterPro" id="IPR023298">
    <property type="entry name" value="ATPase_P-typ_TM_dom_sf"/>
</dbReference>
<dbReference type="InterPro" id="IPR008250">
    <property type="entry name" value="ATPase_P-typ_transduc_dom_A_sf"/>
</dbReference>
<dbReference type="InterPro" id="IPR036412">
    <property type="entry name" value="HAD-like_sf"/>
</dbReference>
<dbReference type="InterPro" id="IPR023214">
    <property type="entry name" value="HAD_sf"/>
</dbReference>
<dbReference type="InterPro" id="IPR017969">
    <property type="entry name" value="Heavy-metal-associated_CS"/>
</dbReference>
<dbReference type="InterPro" id="IPR006122">
    <property type="entry name" value="HMA_Cu_ion-bd"/>
</dbReference>
<dbReference type="InterPro" id="IPR006121">
    <property type="entry name" value="HMA_dom"/>
</dbReference>
<dbReference type="InterPro" id="IPR036163">
    <property type="entry name" value="HMA_dom_sf"/>
</dbReference>
<dbReference type="InterPro" id="IPR027256">
    <property type="entry name" value="P-typ_ATPase_IB"/>
</dbReference>
<dbReference type="InterPro" id="IPR001757">
    <property type="entry name" value="P_typ_ATPase"/>
</dbReference>
<dbReference type="InterPro" id="IPR044492">
    <property type="entry name" value="P_typ_ATPase_HD_dom"/>
</dbReference>
<dbReference type="NCBIfam" id="TIGR01511">
    <property type="entry name" value="ATPase-IB1_Cu"/>
    <property type="match status" value="1"/>
</dbReference>
<dbReference type="NCBIfam" id="TIGR01525">
    <property type="entry name" value="ATPase-IB_hvy"/>
    <property type="match status" value="1"/>
</dbReference>
<dbReference type="NCBIfam" id="TIGR01494">
    <property type="entry name" value="ATPase_P-type"/>
    <property type="match status" value="1"/>
</dbReference>
<dbReference type="NCBIfam" id="TIGR00003">
    <property type="entry name" value="copper ion binding protein"/>
    <property type="match status" value="2"/>
</dbReference>
<dbReference type="PANTHER" id="PTHR43520">
    <property type="entry name" value="ATP7, ISOFORM B"/>
    <property type="match status" value="1"/>
</dbReference>
<dbReference type="PANTHER" id="PTHR43520:SF8">
    <property type="entry name" value="P-TYPE CU(+) TRANSPORTER"/>
    <property type="match status" value="1"/>
</dbReference>
<dbReference type="Pfam" id="PF00122">
    <property type="entry name" value="E1-E2_ATPase"/>
    <property type="match status" value="1"/>
</dbReference>
<dbReference type="Pfam" id="PF00403">
    <property type="entry name" value="HMA"/>
    <property type="match status" value="2"/>
</dbReference>
<dbReference type="Pfam" id="PF00702">
    <property type="entry name" value="Hydrolase"/>
    <property type="match status" value="1"/>
</dbReference>
<dbReference type="PRINTS" id="PR00119">
    <property type="entry name" value="CATATPASE"/>
</dbReference>
<dbReference type="PRINTS" id="PR00943">
    <property type="entry name" value="CUATPASE"/>
</dbReference>
<dbReference type="PRINTS" id="PR00942">
    <property type="entry name" value="CUATPASEI"/>
</dbReference>
<dbReference type="SFLD" id="SFLDS00003">
    <property type="entry name" value="Haloacid_Dehalogenase"/>
    <property type="match status" value="1"/>
</dbReference>
<dbReference type="SFLD" id="SFLDF00027">
    <property type="entry name" value="p-type_atpase"/>
    <property type="match status" value="1"/>
</dbReference>
<dbReference type="SUPFAM" id="SSF81653">
    <property type="entry name" value="Calcium ATPase, transduction domain A"/>
    <property type="match status" value="1"/>
</dbReference>
<dbReference type="SUPFAM" id="SSF81665">
    <property type="entry name" value="Calcium ATPase, transmembrane domain M"/>
    <property type="match status" value="1"/>
</dbReference>
<dbReference type="SUPFAM" id="SSF56784">
    <property type="entry name" value="HAD-like"/>
    <property type="match status" value="1"/>
</dbReference>
<dbReference type="SUPFAM" id="SSF55008">
    <property type="entry name" value="HMA, heavy metal-associated domain"/>
    <property type="match status" value="2"/>
</dbReference>
<dbReference type="PROSITE" id="PS00154">
    <property type="entry name" value="ATPASE_E1_E2"/>
    <property type="match status" value="1"/>
</dbReference>
<dbReference type="PROSITE" id="PS01047">
    <property type="entry name" value="HMA_1"/>
    <property type="match status" value="2"/>
</dbReference>
<dbReference type="PROSITE" id="PS50846">
    <property type="entry name" value="HMA_2"/>
    <property type="match status" value="2"/>
</dbReference>
<comment type="function">
    <text evidence="5">Involved in copper export.</text>
</comment>
<comment type="catalytic activity">
    <reaction>
        <text>Cu(+)(in) + ATP + H2O = Cu(+)(out) + ADP + phosphate + H(+)</text>
        <dbReference type="Rhea" id="RHEA:25792"/>
        <dbReference type="ChEBI" id="CHEBI:15377"/>
        <dbReference type="ChEBI" id="CHEBI:15378"/>
        <dbReference type="ChEBI" id="CHEBI:30616"/>
        <dbReference type="ChEBI" id="CHEBI:43474"/>
        <dbReference type="ChEBI" id="CHEBI:49552"/>
        <dbReference type="ChEBI" id="CHEBI:456216"/>
        <dbReference type="EC" id="7.2.2.8"/>
    </reaction>
</comment>
<comment type="subunit">
    <text evidence="4 6">Monomer at sub-stoichiometric copper concentrations. Homodimer at higher copper concentrations. Forms a heterodimer (electrostatic interactions) with CopZ during the transfer of Cu(+).</text>
</comment>
<comment type="interaction">
    <interactant intactId="EBI-905041">
        <id>O32220</id>
    </interactant>
    <interactant intactId="EBI-905041">
        <id>O32220</id>
        <label>copA</label>
    </interactant>
    <organismsDiffer>false</organismsDiffer>
    <experiments>2</experiments>
</comment>
<comment type="subcellular location">
    <subcellularLocation>
        <location>Cell membrane</location>
        <topology>Multi-pass membrane protein</topology>
    </subcellularLocation>
</comment>
<comment type="induction">
    <text evidence="5">By Cu(2+).</text>
</comment>
<comment type="miscellaneous">
    <text>The copZA operon is activated by CueR and indirectly repressed by YfmP.</text>
</comment>
<comment type="similarity">
    <text evidence="7">Belongs to the cation transport ATPase (P-type) (TC 3.A.3) family. Type IB subfamily.</text>
</comment>
<reference key="1">
    <citation type="journal article" date="1997" name="Nature">
        <title>The complete genome sequence of the Gram-positive bacterium Bacillus subtilis.</title>
        <authorList>
            <person name="Kunst F."/>
            <person name="Ogasawara N."/>
            <person name="Moszer I."/>
            <person name="Albertini A.M."/>
            <person name="Alloni G."/>
            <person name="Azevedo V."/>
            <person name="Bertero M.G."/>
            <person name="Bessieres P."/>
            <person name="Bolotin A."/>
            <person name="Borchert S."/>
            <person name="Borriss R."/>
            <person name="Boursier L."/>
            <person name="Brans A."/>
            <person name="Braun M."/>
            <person name="Brignell S.C."/>
            <person name="Bron S."/>
            <person name="Brouillet S."/>
            <person name="Bruschi C.V."/>
            <person name="Caldwell B."/>
            <person name="Capuano V."/>
            <person name="Carter N.M."/>
            <person name="Choi S.-K."/>
            <person name="Codani J.-J."/>
            <person name="Connerton I.F."/>
            <person name="Cummings N.J."/>
            <person name="Daniel R.A."/>
            <person name="Denizot F."/>
            <person name="Devine K.M."/>
            <person name="Duesterhoeft A."/>
            <person name="Ehrlich S.D."/>
            <person name="Emmerson P.T."/>
            <person name="Entian K.-D."/>
            <person name="Errington J."/>
            <person name="Fabret C."/>
            <person name="Ferrari E."/>
            <person name="Foulger D."/>
            <person name="Fritz C."/>
            <person name="Fujita M."/>
            <person name="Fujita Y."/>
            <person name="Fuma S."/>
            <person name="Galizzi A."/>
            <person name="Galleron N."/>
            <person name="Ghim S.-Y."/>
            <person name="Glaser P."/>
            <person name="Goffeau A."/>
            <person name="Golightly E.J."/>
            <person name="Grandi G."/>
            <person name="Guiseppi G."/>
            <person name="Guy B.J."/>
            <person name="Haga K."/>
            <person name="Haiech J."/>
            <person name="Harwood C.R."/>
            <person name="Henaut A."/>
            <person name="Hilbert H."/>
            <person name="Holsappel S."/>
            <person name="Hosono S."/>
            <person name="Hullo M.-F."/>
            <person name="Itaya M."/>
            <person name="Jones L.-M."/>
            <person name="Joris B."/>
            <person name="Karamata D."/>
            <person name="Kasahara Y."/>
            <person name="Klaerr-Blanchard M."/>
            <person name="Klein C."/>
            <person name="Kobayashi Y."/>
            <person name="Koetter P."/>
            <person name="Koningstein G."/>
            <person name="Krogh S."/>
            <person name="Kumano M."/>
            <person name="Kurita K."/>
            <person name="Lapidus A."/>
            <person name="Lardinois S."/>
            <person name="Lauber J."/>
            <person name="Lazarevic V."/>
            <person name="Lee S.-M."/>
            <person name="Levine A."/>
            <person name="Liu H."/>
            <person name="Masuda S."/>
            <person name="Mauel C."/>
            <person name="Medigue C."/>
            <person name="Medina N."/>
            <person name="Mellado R.P."/>
            <person name="Mizuno M."/>
            <person name="Moestl D."/>
            <person name="Nakai S."/>
            <person name="Noback M."/>
            <person name="Noone D."/>
            <person name="O'Reilly M."/>
            <person name="Ogawa K."/>
            <person name="Ogiwara A."/>
            <person name="Oudega B."/>
            <person name="Park S.-H."/>
            <person name="Parro V."/>
            <person name="Pohl T.M."/>
            <person name="Portetelle D."/>
            <person name="Porwollik S."/>
            <person name="Prescott A.M."/>
            <person name="Presecan E."/>
            <person name="Pujic P."/>
            <person name="Purnelle B."/>
            <person name="Rapoport G."/>
            <person name="Rey M."/>
            <person name="Reynolds S."/>
            <person name="Rieger M."/>
            <person name="Rivolta C."/>
            <person name="Rocha E."/>
            <person name="Roche B."/>
            <person name="Rose M."/>
            <person name="Sadaie Y."/>
            <person name="Sato T."/>
            <person name="Scanlan E."/>
            <person name="Schleich S."/>
            <person name="Schroeter R."/>
            <person name="Scoffone F."/>
            <person name="Sekiguchi J."/>
            <person name="Sekowska A."/>
            <person name="Seror S.J."/>
            <person name="Serror P."/>
            <person name="Shin B.-S."/>
            <person name="Soldo B."/>
            <person name="Sorokin A."/>
            <person name="Tacconi E."/>
            <person name="Takagi T."/>
            <person name="Takahashi H."/>
            <person name="Takemaru K."/>
            <person name="Takeuchi M."/>
            <person name="Tamakoshi A."/>
            <person name="Tanaka T."/>
            <person name="Terpstra P."/>
            <person name="Tognoni A."/>
            <person name="Tosato V."/>
            <person name="Uchiyama S."/>
            <person name="Vandenbol M."/>
            <person name="Vannier F."/>
            <person name="Vassarotti A."/>
            <person name="Viari A."/>
            <person name="Wambutt R."/>
            <person name="Wedler E."/>
            <person name="Wedler H."/>
            <person name="Weitzenegger T."/>
            <person name="Winters P."/>
            <person name="Wipat A."/>
            <person name="Yamamoto H."/>
            <person name="Yamane K."/>
            <person name="Yasumoto K."/>
            <person name="Yata K."/>
            <person name="Yoshida K."/>
            <person name="Yoshikawa H.-F."/>
            <person name="Zumstein E."/>
            <person name="Yoshikawa H."/>
            <person name="Danchin A."/>
        </authorList>
    </citation>
    <scope>NUCLEOTIDE SEQUENCE [LARGE SCALE GENOMIC DNA]</scope>
    <source>
        <strain>168</strain>
    </source>
</reference>
<reference key="2">
    <citation type="journal article" date="2003" name="FEMS Microbiol. Lett.">
        <title>CopZ from Bacillus subtilis interacts in vivo with a copper exporting CPx-type ATPase CopA.</title>
        <authorList>
            <person name="Radford D.S."/>
            <person name="Kihlken M.A."/>
            <person name="Borrelly G.P.M."/>
            <person name="Harwood C.R."/>
            <person name="Le Brun N.E."/>
            <person name="Cavet J.S."/>
        </authorList>
    </citation>
    <scope>FUNCTION IN COPPER EXPORT</scope>
    <scope>INDUCTION BY COPPER</scope>
    <scope>INTERACTION WITH COPZ</scope>
    <source>
        <strain>168</strain>
    </source>
</reference>
<reference key="3">
    <citation type="journal article" date="2003" name="Microbiology">
        <title>Two MerR homologues that affect copper induction of the Bacillus subtilis copZA operon.</title>
        <authorList>
            <person name="Gaballa A."/>
            <person name="Cao M."/>
            <person name="Helmann J.D."/>
        </authorList>
    </citation>
    <scope>REGULATION</scope>
</reference>
<reference key="4">
    <citation type="journal article" date="2002" name="J. Mol. Biol.">
        <title>Solution structure of the N-terminal domain of a potential copper-translocating P-type ATPase from Bacillus subtilis in the apo and Cu(I) loaded states.</title>
        <authorList>
            <person name="Banci L."/>
            <person name="Bertini I."/>
            <person name="Ciofi-Baffoni S."/>
            <person name="D'Onofrio M."/>
            <person name="Gonnelli L."/>
            <person name="Marhuenda-Egea F.C."/>
            <person name="Ruiz-Duenas F.J."/>
        </authorList>
    </citation>
    <scope>STRUCTURE BY NMR OF 1-150 IN COMPLEX WITH COPPER IONS</scope>
</reference>
<reference key="5">
    <citation type="journal article" date="2003" name="J. Biol. Chem.">
        <title>Structural basis for the function of the N-terminal domain of the ATPase CopA from Bacillus subtilis.</title>
        <authorList>
            <person name="Banci L."/>
            <person name="Bertini I."/>
            <person name="Ciofi-Baffoni S."/>
            <person name="Gonnelli L."/>
            <person name="Su X.-C."/>
        </authorList>
    </citation>
    <scope>STRUCTURE BY NMR OF 1-150</scope>
</reference>
<reference key="6">
    <citation type="journal article" date="2003" name="Biochemistry">
        <title>Understanding copper trafficking in bacteria: interaction between the copper transport protein CopZ and the N-terminal domain of the copper ATPase CopA from Bacillus subtilis.</title>
        <authorList>
            <person name="Banci L."/>
            <person name="Bertini I."/>
            <person name="Ciofi-Baffoni S."/>
            <person name="Del Conte R."/>
            <person name="Gonnelli L."/>
        </authorList>
    </citation>
    <scope>STRUCTURE BY NMR OF 1-150</scope>
</reference>
<reference key="7">
    <citation type="journal article" date="2008" name="Biochem. J.">
        <title>Structure and Cu(I)-binding properties of the N-terminal soluble domains of Bacillus subtilis CopA.</title>
        <authorList>
            <person name="Singleton C."/>
            <person name="Banci L."/>
            <person name="Ciofi-Baffoni S."/>
            <person name="Tenori L."/>
            <person name="Kihlken M.A."/>
            <person name="Boetzel R."/>
            <person name="Le Brun N.E."/>
        </authorList>
    </citation>
    <scope>STRUCTURE BY NMR OF 1-146 IN COMPLEX WITH COPPER IONS</scope>
    <scope>SUBUNIT</scope>
    <source>
        <strain>168 / BGSC1A1</strain>
    </source>
</reference>
<name>COPA_BACSU</name>
<sequence>MSEQKEIAMQVSGMTCAACAARIEKGLKRMPGVTDANVNLATETSNVIYDPAETGTAAIQEKIEKLGYHVVTEKAEFDIEGMTCAACANRIEKRLNKIEGVANAPVNFALETVTVEYNPKEASVSDLKEAVDKLGYKLKLKGEQDSEAAAKKKEERKQTARLIFSAVLSFPLLWAMVSHFTFTSFIWVPDIFLNPWMQFALATPVQFLIGWPFYVGAYKALRNKSANMDVLVALGTTAAYAYSLYLTFQSIGSHGHTDGLYYETSAILLTLILLGKLFETKAKGRSSDAIKKLMKLQAKTATVVRDGQEQIIPIDEVLVNDIVYVKPGERIPVDGEVVEGRSAVDESMITGESLPVDKNPGDSVTGSTVNANGFLKIKAVNVGKDTALSHIIKIVEEAQGSKAPIQRLADQISGIFVPIVLGIAVLTFLIWYLWAAPGDFAEAISKFIAVLVIACPCALGLATPTSIMAGSGRAAEFGILFKGGEHLEKTHRLDTIVLDKTGTVTNGKPRLTDAIPFGRFEEKDLLQFAAAAETGSEHPLGEAIIAGVKDKGLEIPKLTRFEAKVGAGILAEAGGKSILVGTRKLMESEQVEHGALLAQMEELEAEGKTVMLVSIDGEAAGLVAVADTIKDTSRKAVARLKELGLDVIMMTGDNRRTAEAIAKEAGIANIIAEVLPEQKAAEIARLQKEGRQTAMVGDGINDAPALATADIGMAIGTGTDIAMETADITLIRGDLNSIADAIRMSRLTMKNIKQNLFWALGYNSLGIPIAALGFLAPWIAGAAMAFSSVSVVLNALRLQKVK</sequence>
<keyword id="KW-0002">3D-structure</keyword>
<keyword id="KW-0067">ATP-binding</keyword>
<keyword id="KW-1003">Cell membrane</keyword>
<keyword id="KW-0186">Copper</keyword>
<keyword id="KW-0187">Copper transport</keyword>
<keyword id="KW-0406">Ion transport</keyword>
<keyword id="KW-0460">Magnesium</keyword>
<keyword id="KW-0472">Membrane</keyword>
<keyword id="KW-0479">Metal-binding</keyword>
<keyword id="KW-0547">Nucleotide-binding</keyword>
<keyword id="KW-0597">Phosphoprotein</keyword>
<keyword id="KW-1185">Reference proteome</keyword>
<keyword id="KW-0677">Repeat</keyword>
<keyword id="KW-1278">Translocase</keyword>
<keyword id="KW-0812">Transmembrane</keyword>
<keyword id="KW-1133">Transmembrane helix</keyword>
<keyword id="KW-0813">Transport</keyword>
<feature type="chain" id="PRO_0000046330" description="Copper-exporting P-type ATPase">
    <location>
        <begin position="1"/>
        <end position="802"/>
    </location>
</feature>
<feature type="transmembrane region" description="Helical" evidence="2">
    <location>
        <begin position="162"/>
        <end position="181"/>
    </location>
</feature>
<feature type="transmembrane region" description="Helical" evidence="2">
    <location>
        <begin position="196"/>
        <end position="218"/>
    </location>
</feature>
<feature type="transmembrane region" description="Helical" evidence="2">
    <location>
        <begin position="230"/>
        <end position="249"/>
    </location>
</feature>
<feature type="transmembrane region" description="Helical" evidence="2">
    <location>
        <begin position="259"/>
        <end position="278"/>
    </location>
</feature>
<feature type="transmembrane region" description="Helical" evidence="2">
    <location>
        <begin position="412"/>
        <end position="434"/>
    </location>
</feature>
<feature type="transmembrane region" description="Helical" evidence="2">
    <location>
        <begin position="447"/>
        <end position="469"/>
    </location>
</feature>
<feature type="transmembrane region" description="Helical" evidence="2">
    <location>
        <begin position="756"/>
        <end position="775"/>
    </location>
</feature>
<feature type="transmembrane region" description="Helical" evidence="2">
    <location>
        <begin position="779"/>
        <end position="796"/>
    </location>
</feature>
<feature type="domain" description="HMA 1" evidence="3">
    <location>
        <begin position="5"/>
        <end position="71"/>
    </location>
</feature>
<feature type="domain" description="HMA 2" evidence="3">
    <location>
        <begin position="73"/>
        <end position="139"/>
    </location>
</feature>
<feature type="active site" description="4-aspartylphosphate intermediate" evidence="1">
    <location>
        <position position="499"/>
    </location>
</feature>
<feature type="binding site" evidence="3">
    <location>
        <position position="16"/>
    </location>
    <ligand>
        <name>Cu(+)</name>
        <dbReference type="ChEBI" id="CHEBI:49552"/>
        <label>1</label>
    </ligand>
</feature>
<feature type="binding site" evidence="3">
    <location>
        <position position="19"/>
    </location>
    <ligand>
        <name>Cu(+)</name>
        <dbReference type="ChEBI" id="CHEBI:49552"/>
        <label>1</label>
    </ligand>
</feature>
<feature type="binding site" evidence="3">
    <location>
        <position position="84"/>
    </location>
    <ligand>
        <name>Cu(+)</name>
        <dbReference type="ChEBI" id="CHEBI:49552"/>
        <label>2</label>
    </ligand>
</feature>
<feature type="binding site" evidence="3">
    <location>
        <position position="87"/>
    </location>
    <ligand>
        <name>Cu(+)</name>
        <dbReference type="ChEBI" id="CHEBI:49552"/>
        <label>2</label>
    </ligand>
</feature>
<feature type="binding site">
    <location>
        <position position="698"/>
    </location>
    <ligand>
        <name>Mg(2+)</name>
        <dbReference type="ChEBI" id="CHEBI:18420"/>
    </ligand>
</feature>
<feature type="binding site">
    <location>
        <position position="702"/>
    </location>
    <ligand>
        <name>Mg(2+)</name>
        <dbReference type="ChEBI" id="CHEBI:18420"/>
    </ligand>
</feature>
<feature type="strand" evidence="9">
    <location>
        <begin position="5"/>
        <end position="13"/>
    </location>
</feature>
<feature type="helix" evidence="9">
    <location>
        <begin position="19"/>
        <end position="28"/>
    </location>
</feature>
<feature type="strand" evidence="9">
    <location>
        <begin position="33"/>
        <end position="39"/>
    </location>
</feature>
<feature type="helix" evidence="9">
    <location>
        <begin position="40"/>
        <end position="42"/>
    </location>
</feature>
<feature type="strand" evidence="9">
    <location>
        <begin position="44"/>
        <end position="49"/>
    </location>
</feature>
<feature type="turn" evidence="9">
    <location>
        <begin position="51"/>
        <end position="53"/>
    </location>
</feature>
<feature type="helix" evidence="9">
    <location>
        <begin position="56"/>
        <end position="66"/>
    </location>
</feature>
<feature type="strand" evidence="9">
    <location>
        <begin position="69"/>
        <end position="71"/>
    </location>
</feature>
<feature type="strand" evidence="8">
    <location>
        <begin position="73"/>
        <end position="81"/>
    </location>
</feature>
<feature type="helix" evidence="8">
    <location>
        <begin position="85"/>
        <end position="96"/>
    </location>
</feature>
<feature type="strand" evidence="8">
    <location>
        <begin position="101"/>
        <end position="103"/>
    </location>
</feature>
<feature type="strand" evidence="8">
    <location>
        <begin position="108"/>
        <end position="117"/>
    </location>
</feature>
<feature type="turn" evidence="8">
    <location>
        <begin position="119"/>
        <end position="121"/>
    </location>
</feature>
<feature type="helix" evidence="8">
    <location>
        <begin position="124"/>
        <end position="134"/>
    </location>
</feature>
<feature type="strand" evidence="8">
    <location>
        <begin position="136"/>
        <end position="140"/>
    </location>
</feature>
<feature type="strand" evidence="8">
    <location>
        <begin position="143"/>
        <end position="146"/>
    </location>
</feature>
<proteinExistence type="evidence at protein level"/>
<protein>
    <recommendedName>
        <fullName>Copper-exporting P-type ATPase</fullName>
        <shortName>Protein CopA</shortName>
        <ecNumber>7.2.2.8</ecNumber>
    </recommendedName>
    <alternativeName>
        <fullName>Copper-exporting P-type ATPase A</fullName>
    </alternativeName>
    <alternativeName>
        <fullName>Cu(+)-exporting ATPase</fullName>
    </alternativeName>
</protein>
<gene>
    <name type="primary">copA</name>
    <name type="synonym">yvgX</name>
    <name type="ordered locus">BSU33500</name>
</gene>
<accession>O32220</accession>
<organism>
    <name type="scientific">Bacillus subtilis (strain 168)</name>
    <dbReference type="NCBI Taxonomy" id="224308"/>
    <lineage>
        <taxon>Bacteria</taxon>
        <taxon>Bacillati</taxon>
        <taxon>Bacillota</taxon>
        <taxon>Bacilli</taxon>
        <taxon>Bacillales</taxon>
        <taxon>Bacillaceae</taxon>
        <taxon>Bacillus</taxon>
    </lineage>
</organism>